<organism>
    <name type="scientific">Buchnera aphidicola subsp. Schizaphis graminum (strain Sg)</name>
    <dbReference type="NCBI Taxonomy" id="198804"/>
    <lineage>
        <taxon>Bacteria</taxon>
        <taxon>Pseudomonadati</taxon>
        <taxon>Pseudomonadota</taxon>
        <taxon>Gammaproteobacteria</taxon>
        <taxon>Enterobacterales</taxon>
        <taxon>Erwiniaceae</taxon>
        <taxon>Buchnera</taxon>
    </lineage>
</organism>
<feature type="chain" id="PRO_0000095757" description="Translation initiation factor IF-1">
    <location>
        <begin position="1"/>
        <end position="72"/>
    </location>
</feature>
<feature type="domain" description="S1-like" evidence="1">
    <location>
        <begin position="1"/>
        <end position="72"/>
    </location>
</feature>
<reference key="1">
    <citation type="journal article" date="2002" name="Science">
        <title>50 million years of genomic stasis in endosymbiotic bacteria.</title>
        <authorList>
            <person name="Tamas I."/>
            <person name="Klasson L."/>
            <person name="Canbaeck B."/>
            <person name="Naeslund A.K."/>
            <person name="Eriksson A.-S."/>
            <person name="Wernegreen J.J."/>
            <person name="Sandstroem J.P."/>
            <person name="Moran N.A."/>
            <person name="Andersson S.G.E."/>
        </authorList>
    </citation>
    <scope>NUCLEOTIDE SEQUENCE [LARGE SCALE GENOMIC DNA]</scope>
    <source>
        <strain>Sg</strain>
    </source>
</reference>
<comment type="function">
    <text evidence="1">One of the essential components for the initiation of protein synthesis. Stabilizes the binding of IF-2 and IF-3 on the 30S subunit to which N-formylmethionyl-tRNA(fMet) subsequently binds. Helps modulate mRNA selection, yielding the 30S pre-initiation complex (PIC). Upon addition of the 50S ribosomal subunit IF-1, IF-2 and IF-3 are released leaving the mature 70S translation initiation complex.</text>
</comment>
<comment type="subunit">
    <text evidence="1">Component of the 30S ribosomal translation pre-initiation complex which assembles on the 30S ribosome in the order IF-2 and IF-3, IF-1 and N-formylmethionyl-tRNA(fMet); mRNA recruitment can occur at any time during PIC assembly.</text>
</comment>
<comment type="subcellular location">
    <subcellularLocation>
        <location evidence="1">Cytoplasm</location>
    </subcellularLocation>
</comment>
<comment type="similarity">
    <text evidence="1">Belongs to the IF-1 family.</text>
</comment>
<sequence>MTKEDNIEMQGIVIDTLPNTMFRVELENKHVITAHISGKMRKNYIRILTGDKVTIELTPYDLTKGRIIFRSR</sequence>
<proteinExistence type="inferred from homology"/>
<accession>Q8K9M8</accession>
<protein>
    <recommendedName>
        <fullName evidence="1">Translation initiation factor IF-1</fullName>
    </recommendedName>
</protein>
<evidence type="ECO:0000255" key="1">
    <source>
        <dbReference type="HAMAP-Rule" id="MF_00075"/>
    </source>
</evidence>
<keyword id="KW-0963">Cytoplasm</keyword>
<keyword id="KW-0396">Initiation factor</keyword>
<keyword id="KW-0648">Protein biosynthesis</keyword>
<keyword id="KW-0694">RNA-binding</keyword>
<keyword id="KW-0699">rRNA-binding</keyword>
<name>IF1_BUCAP</name>
<dbReference type="EMBL" id="AE013218">
    <property type="protein sequence ID" value="AAM67859.1"/>
    <property type="molecule type" value="Genomic_DNA"/>
</dbReference>
<dbReference type="RefSeq" id="WP_011053826.1">
    <property type="nucleotide sequence ID" value="NC_004061.1"/>
</dbReference>
<dbReference type="SMR" id="Q8K9M8"/>
<dbReference type="STRING" id="198804.BUsg_305"/>
<dbReference type="GeneID" id="93003774"/>
<dbReference type="KEGG" id="bas:BUsg_305"/>
<dbReference type="eggNOG" id="COG0361">
    <property type="taxonomic scope" value="Bacteria"/>
</dbReference>
<dbReference type="HOGENOM" id="CLU_151267_1_0_6"/>
<dbReference type="Proteomes" id="UP000000416">
    <property type="component" value="Chromosome"/>
</dbReference>
<dbReference type="GO" id="GO:0005829">
    <property type="term" value="C:cytosol"/>
    <property type="evidence" value="ECO:0007669"/>
    <property type="project" value="TreeGrafter"/>
</dbReference>
<dbReference type="GO" id="GO:0043022">
    <property type="term" value="F:ribosome binding"/>
    <property type="evidence" value="ECO:0007669"/>
    <property type="project" value="UniProtKB-UniRule"/>
</dbReference>
<dbReference type="GO" id="GO:0019843">
    <property type="term" value="F:rRNA binding"/>
    <property type="evidence" value="ECO:0007669"/>
    <property type="project" value="UniProtKB-UniRule"/>
</dbReference>
<dbReference type="GO" id="GO:0003743">
    <property type="term" value="F:translation initiation factor activity"/>
    <property type="evidence" value="ECO:0007669"/>
    <property type="project" value="UniProtKB-UniRule"/>
</dbReference>
<dbReference type="CDD" id="cd04451">
    <property type="entry name" value="S1_IF1"/>
    <property type="match status" value="1"/>
</dbReference>
<dbReference type="FunFam" id="2.40.50.140:FF:000002">
    <property type="entry name" value="Translation initiation factor IF-1"/>
    <property type="match status" value="1"/>
</dbReference>
<dbReference type="Gene3D" id="2.40.50.140">
    <property type="entry name" value="Nucleic acid-binding proteins"/>
    <property type="match status" value="1"/>
</dbReference>
<dbReference type="HAMAP" id="MF_00075">
    <property type="entry name" value="IF_1"/>
    <property type="match status" value="1"/>
</dbReference>
<dbReference type="InterPro" id="IPR012340">
    <property type="entry name" value="NA-bd_OB-fold"/>
</dbReference>
<dbReference type="InterPro" id="IPR006196">
    <property type="entry name" value="RNA-binding_domain_S1_IF1"/>
</dbReference>
<dbReference type="InterPro" id="IPR003029">
    <property type="entry name" value="S1_domain"/>
</dbReference>
<dbReference type="InterPro" id="IPR004368">
    <property type="entry name" value="TIF_IF1"/>
</dbReference>
<dbReference type="NCBIfam" id="TIGR00008">
    <property type="entry name" value="infA"/>
    <property type="match status" value="1"/>
</dbReference>
<dbReference type="PANTHER" id="PTHR33370">
    <property type="entry name" value="TRANSLATION INITIATION FACTOR IF-1, CHLOROPLASTIC"/>
    <property type="match status" value="1"/>
</dbReference>
<dbReference type="PANTHER" id="PTHR33370:SF1">
    <property type="entry name" value="TRANSLATION INITIATION FACTOR IF-1, CHLOROPLASTIC"/>
    <property type="match status" value="1"/>
</dbReference>
<dbReference type="Pfam" id="PF01176">
    <property type="entry name" value="eIF-1a"/>
    <property type="match status" value="1"/>
</dbReference>
<dbReference type="SMART" id="SM00316">
    <property type="entry name" value="S1"/>
    <property type="match status" value="1"/>
</dbReference>
<dbReference type="SUPFAM" id="SSF50249">
    <property type="entry name" value="Nucleic acid-binding proteins"/>
    <property type="match status" value="1"/>
</dbReference>
<dbReference type="PROSITE" id="PS50832">
    <property type="entry name" value="S1_IF1_TYPE"/>
    <property type="match status" value="1"/>
</dbReference>
<gene>
    <name evidence="1" type="primary">infA</name>
    <name type="ordered locus">BUsg_305</name>
</gene>